<keyword id="KW-0150">Chloroplast</keyword>
<keyword id="KW-0472">Membrane</keyword>
<keyword id="KW-0520">NAD</keyword>
<keyword id="KW-0521">NADP</keyword>
<keyword id="KW-0934">Plastid</keyword>
<keyword id="KW-0618">Plastoquinone</keyword>
<keyword id="KW-0874">Quinone</keyword>
<keyword id="KW-0793">Thylakoid</keyword>
<keyword id="KW-1278">Translocase</keyword>
<keyword id="KW-0813">Transport</keyword>
<reference key="1">
    <citation type="submission" date="2007-03" db="EMBL/GenBank/DDBJ databases">
        <title>Sequencing analysis of Nasturtium officinale chloroplast DNA.</title>
        <authorList>
            <person name="Hosouchi T."/>
            <person name="Tsuruoka H."/>
            <person name="Kotani H."/>
        </authorList>
    </citation>
    <scope>NUCLEOTIDE SEQUENCE [LARGE SCALE GENOMIC DNA]</scope>
</reference>
<geneLocation type="chloroplast"/>
<dbReference type="EC" id="7.1.1.-" evidence="1"/>
<dbReference type="EMBL" id="AP009376">
    <property type="protein sequence ID" value="BAF50641.1"/>
    <property type="molecule type" value="Genomic_DNA"/>
</dbReference>
<dbReference type="RefSeq" id="YP_001123817.1">
    <property type="nucleotide sequence ID" value="NC_009275.1"/>
</dbReference>
<dbReference type="SMR" id="A4QLT6"/>
<dbReference type="GeneID" id="4962117"/>
<dbReference type="GO" id="GO:0009535">
    <property type="term" value="C:chloroplast thylakoid membrane"/>
    <property type="evidence" value="ECO:0007669"/>
    <property type="project" value="UniProtKB-SubCell"/>
</dbReference>
<dbReference type="GO" id="GO:0008137">
    <property type="term" value="F:NADH dehydrogenase (ubiquinone) activity"/>
    <property type="evidence" value="ECO:0007669"/>
    <property type="project" value="InterPro"/>
</dbReference>
<dbReference type="GO" id="GO:0048038">
    <property type="term" value="F:quinone binding"/>
    <property type="evidence" value="ECO:0007669"/>
    <property type="project" value="UniProtKB-KW"/>
</dbReference>
<dbReference type="GO" id="GO:0019684">
    <property type="term" value="P:photosynthesis, light reaction"/>
    <property type="evidence" value="ECO:0007669"/>
    <property type="project" value="UniProtKB-UniRule"/>
</dbReference>
<dbReference type="FunFam" id="3.30.460.80:FF:000004">
    <property type="entry name" value="NAD(P)H-quinone oxidoreductase subunit J, chloroplastic"/>
    <property type="match status" value="1"/>
</dbReference>
<dbReference type="Gene3D" id="3.30.460.80">
    <property type="entry name" value="NADH:ubiquinone oxidoreductase, 30kDa subunit"/>
    <property type="match status" value="1"/>
</dbReference>
<dbReference type="HAMAP" id="MF_01357">
    <property type="entry name" value="NDH1_NuoC"/>
    <property type="match status" value="1"/>
</dbReference>
<dbReference type="InterPro" id="IPR010218">
    <property type="entry name" value="NADH_DH_suC"/>
</dbReference>
<dbReference type="InterPro" id="IPR037232">
    <property type="entry name" value="NADH_quin_OxRdtase_su_C/D-like"/>
</dbReference>
<dbReference type="InterPro" id="IPR001268">
    <property type="entry name" value="NADH_UbQ_OxRdtase_30kDa_su"/>
</dbReference>
<dbReference type="InterPro" id="IPR020396">
    <property type="entry name" value="NADH_UbQ_OxRdtase_CS"/>
</dbReference>
<dbReference type="NCBIfam" id="NF009141">
    <property type="entry name" value="PRK12494.1"/>
    <property type="match status" value="1"/>
</dbReference>
<dbReference type="PANTHER" id="PTHR10884:SF14">
    <property type="entry name" value="NADH DEHYDROGENASE [UBIQUINONE] IRON-SULFUR PROTEIN 3, MITOCHONDRIAL"/>
    <property type="match status" value="1"/>
</dbReference>
<dbReference type="PANTHER" id="PTHR10884">
    <property type="entry name" value="NADH DEHYDROGENASE UBIQUINONE IRON-SULFUR PROTEIN 3"/>
    <property type="match status" value="1"/>
</dbReference>
<dbReference type="Pfam" id="PF00329">
    <property type="entry name" value="Complex1_30kDa"/>
    <property type="match status" value="1"/>
</dbReference>
<dbReference type="SUPFAM" id="SSF143243">
    <property type="entry name" value="Nqo5-like"/>
    <property type="match status" value="1"/>
</dbReference>
<dbReference type="PROSITE" id="PS00542">
    <property type="entry name" value="COMPLEX1_30K"/>
    <property type="match status" value="1"/>
</dbReference>
<name>NDHJ_NASOF</name>
<gene>
    <name evidence="1" type="primary">ndhJ</name>
</gene>
<feature type="chain" id="PRO_0000358284" description="NAD(P)H-quinone oxidoreductase subunit J, chloroplastic">
    <location>
        <begin position="1"/>
        <end position="158"/>
    </location>
</feature>
<sequence>MQGTLSVWLAKRGLVHRSLGFDYQGIETLQIKPEDWDSIAVILYVYGYNYLRSQCAYDVAPGGLLASVYHLTRIEYGVNQAEEVCIKVFTHRSNPRIPSVFWVWKSTDFQERESYDMLGITYDSHPRLKRILMPESWIGWPLRKDYIAPNFYEIQDAY</sequence>
<evidence type="ECO:0000255" key="1">
    <source>
        <dbReference type="HAMAP-Rule" id="MF_01357"/>
    </source>
</evidence>
<accession>A4QLT6</accession>
<proteinExistence type="inferred from homology"/>
<organism>
    <name type="scientific">Nasturtium officinale</name>
    <name type="common">Watercress</name>
    <name type="synonym">Rorippa nasturtium-aquaticum</name>
    <dbReference type="NCBI Taxonomy" id="65948"/>
    <lineage>
        <taxon>Eukaryota</taxon>
        <taxon>Viridiplantae</taxon>
        <taxon>Streptophyta</taxon>
        <taxon>Embryophyta</taxon>
        <taxon>Tracheophyta</taxon>
        <taxon>Spermatophyta</taxon>
        <taxon>Magnoliopsida</taxon>
        <taxon>eudicotyledons</taxon>
        <taxon>Gunneridae</taxon>
        <taxon>Pentapetalae</taxon>
        <taxon>rosids</taxon>
        <taxon>malvids</taxon>
        <taxon>Brassicales</taxon>
        <taxon>Brassicaceae</taxon>
        <taxon>Cardamineae</taxon>
        <taxon>Nasturtium</taxon>
    </lineage>
</organism>
<protein>
    <recommendedName>
        <fullName evidence="1">NAD(P)H-quinone oxidoreductase subunit J, chloroplastic</fullName>
        <ecNumber evidence="1">7.1.1.-</ecNumber>
    </recommendedName>
    <alternativeName>
        <fullName>NAD(P)H dehydrogenase subunit J</fullName>
    </alternativeName>
    <alternativeName>
        <fullName evidence="1">NADH-plastoquinone oxidoreductase subunit J</fullName>
    </alternativeName>
</protein>
<comment type="function">
    <text evidence="1">NDH shuttles electrons from NAD(P)H:plastoquinone, via FMN and iron-sulfur (Fe-S) centers, to quinones in the photosynthetic chain and possibly in a chloroplast respiratory chain. The immediate electron acceptor for the enzyme in this species is believed to be plastoquinone. Couples the redox reaction to proton translocation, and thus conserves the redox energy in a proton gradient.</text>
</comment>
<comment type="catalytic activity">
    <reaction evidence="1">
        <text>a plastoquinone + NADH + (n+1) H(+)(in) = a plastoquinol + NAD(+) + n H(+)(out)</text>
        <dbReference type="Rhea" id="RHEA:42608"/>
        <dbReference type="Rhea" id="RHEA-COMP:9561"/>
        <dbReference type="Rhea" id="RHEA-COMP:9562"/>
        <dbReference type="ChEBI" id="CHEBI:15378"/>
        <dbReference type="ChEBI" id="CHEBI:17757"/>
        <dbReference type="ChEBI" id="CHEBI:57540"/>
        <dbReference type="ChEBI" id="CHEBI:57945"/>
        <dbReference type="ChEBI" id="CHEBI:62192"/>
    </reaction>
</comment>
<comment type="catalytic activity">
    <reaction evidence="1">
        <text>a plastoquinone + NADPH + (n+1) H(+)(in) = a plastoquinol + NADP(+) + n H(+)(out)</text>
        <dbReference type="Rhea" id="RHEA:42612"/>
        <dbReference type="Rhea" id="RHEA-COMP:9561"/>
        <dbReference type="Rhea" id="RHEA-COMP:9562"/>
        <dbReference type="ChEBI" id="CHEBI:15378"/>
        <dbReference type="ChEBI" id="CHEBI:17757"/>
        <dbReference type="ChEBI" id="CHEBI:57783"/>
        <dbReference type="ChEBI" id="CHEBI:58349"/>
        <dbReference type="ChEBI" id="CHEBI:62192"/>
    </reaction>
</comment>
<comment type="subunit">
    <text evidence="1">NDH is composed of at least 16 different subunits, 5 of which are encoded in the nucleus.</text>
</comment>
<comment type="subcellular location">
    <subcellularLocation>
        <location evidence="1">Plastid</location>
        <location evidence="1">Chloroplast thylakoid membrane</location>
        <topology evidence="1">Peripheral membrane protein</topology>
        <orientation evidence="1">Stromal side</orientation>
    </subcellularLocation>
</comment>
<comment type="similarity">
    <text evidence="1">Belongs to the complex I 30 kDa subunit family.</text>
</comment>